<accession>Q8WME4</accession>
<name>HSP1_DESRO</name>
<organism>
    <name type="scientific">Desmodus rotundus</name>
    <name type="common">Vampire bat</name>
    <dbReference type="NCBI Taxonomy" id="9430"/>
    <lineage>
        <taxon>Eukaryota</taxon>
        <taxon>Metazoa</taxon>
        <taxon>Chordata</taxon>
        <taxon>Craniata</taxon>
        <taxon>Vertebrata</taxon>
        <taxon>Euteleostomi</taxon>
        <taxon>Mammalia</taxon>
        <taxon>Eutheria</taxon>
        <taxon>Laurasiatheria</taxon>
        <taxon>Chiroptera</taxon>
        <taxon>Yangochiroptera</taxon>
        <taxon>Phyllostomidae</taxon>
        <taxon>Desmodontinae</taxon>
        <taxon>Desmodus</taxon>
    </lineage>
</organism>
<reference key="1">
    <citation type="journal article" date="2002" name="Mol. Phylogenet. Evol.">
        <title>Characterization and phylogenetic utility of the mammalian protamine P1 gene.</title>
        <authorList>
            <person name="Van Den Bussche R.A."/>
            <person name="Hoofer S.R."/>
            <person name="Hansen E.W."/>
        </authorList>
    </citation>
    <scope>NUCLEOTIDE SEQUENCE [GENOMIC DNA]</scope>
</reference>
<protein>
    <recommendedName>
        <fullName>Sperm protamine P1</fullName>
    </recommendedName>
</protein>
<proteinExistence type="evidence at transcript level"/>
<sequence length="48" mass="6506">MARYRCCRSPSRSRCRRRRRRCRRRRRRCCRRRRRVCCRRYTVRCRRR</sequence>
<dbReference type="EMBL" id="AF435934">
    <property type="protein sequence ID" value="AAL35568.1"/>
    <property type="molecule type" value="Genomic_DNA"/>
</dbReference>
<dbReference type="GO" id="GO:0000786">
    <property type="term" value="C:nucleosome"/>
    <property type="evidence" value="ECO:0007669"/>
    <property type="project" value="UniProtKB-KW"/>
</dbReference>
<dbReference type="GO" id="GO:0005634">
    <property type="term" value="C:nucleus"/>
    <property type="evidence" value="ECO:0007669"/>
    <property type="project" value="UniProtKB-SubCell"/>
</dbReference>
<dbReference type="GO" id="GO:0003677">
    <property type="term" value="F:DNA binding"/>
    <property type="evidence" value="ECO:0007669"/>
    <property type="project" value="UniProtKB-KW"/>
</dbReference>
<dbReference type="GO" id="GO:0030261">
    <property type="term" value="P:chromosome condensation"/>
    <property type="evidence" value="ECO:0007669"/>
    <property type="project" value="UniProtKB-KW"/>
</dbReference>
<dbReference type="GO" id="GO:0035092">
    <property type="term" value="P:sperm DNA condensation"/>
    <property type="evidence" value="ECO:0007669"/>
    <property type="project" value="InterPro"/>
</dbReference>
<dbReference type="InterPro" id="IPR000221">
    <property type="entry name" value="Protamine_P1"/>
</dbReference>
<dbReference type="Pfam" id="PF00260">
    <property type="entry name" value="Protamine_P1"/>
    <property type="match status" value="1"/>
</dbReference>
<dbReference type="PROSITE" id="PS00048">
    <property type="entry name" value="PROTAMINE_P1"/>
    <property type="match status" value="1"/>
</dbReference>
<gene>
    <name type="primary">PRM1</name>
</gene>
<evidence type="ECO:0000250" key="1"/>
<evidence type="ECO:0000305" key="2"/>
<feature type="chain" id="PRO_0000191470" description="Sperm protamine P1">
    <location>
        <begin position="1"/>
        <end position="48"/>
    </location>
</feature>
<keyword id="KW-0158">Chromosome</keyword>
<keyword id="KW-0217">Developmental protein</keyword>
<keyword id="KW-0221">Differentiation</keyword>
<keyword id="KW-0226">DNA condensation</keyword>
<keyword id="KW-0238">DNA-binding</keyword>
<keyword id="KW-0544">Nucleosome core</keyword>
<keyword id="KW-0539">Nucleus</keyword>
<keyword id="KW-0744">Spermatogenesis</keyword>
<comment type="function">
    <text evidence="1">Protamines substitute for histones in the chromatin of sperm during the haploid phase of spermatogenesis. They compact sperm DNA into a highly condensed, stable and inactive complex (By similarity).</text>
</comment>
<comment type="subcellular location">
    <subcellularLocation>
        <location evidence="1">Nucleus</location>
    </subcellularLocation>
    <subcellularLocation>
        <location evidence="1">Chromosome</location>
    </subcellularLocation>
</comment>
<comment type="tissue specificity">
    <text>Testis.</text>
</comment>
<comment type="similarity">
    <text evidence="2">Belongs to the protamine P1 family.</text>
</comment>